<organism>
    <name type="scientific">Escherichia coli O81 (strain ED1a)</name>
    <dbReference type="NCBI Taxonomy" id="585397"/>
    <lineage>
        <taxon>Bacteria</taxon>
        <taxon>Pseudomonadati</taxon>
        <taxon>Pseudomonadota</taxon>
        <taxon>Gammaproteobacteria</taxon>
        <taxon>Enterobacterales</taxon>
        <taxon>Enterobacteriaceae</taxon>
        <taxon>Escherichia</taxon>
    </lineage>
</organism>
<dbReference type="EC" id="2.1.1.-" evidence="1"/>
<dbReference type="EC" id="2.1.1.35" evidence="1"/>
<dbReference type="EMBL" id="CU928162">
    <property type="protein sequence ID" value="CAR10781.2"/>
    <property type="molecule type" value="Genomic_DNA"/>
</dbReference>
<dbReference type="RefSeq" id="WP_000187042.1">
    <property type="nucleotide sequence ID" value="NC_011745.1"/>
</dbReference>
<dbReference type="SMR" id="B7MR93"/>
<dbReference type="KEGG" id="ecq:ECED1_4674"/>
<dbReference type="HOGENOM" id="CLU_043022_0_0_6"/>
<dbReference type="Proteomes" id="UP000000748">
    <property type="component" value="Chromosome"/>
</dbReference>
<dbReference type="GO" id="GO:0005829">
    <property type="term" value="C:cytosol"/>
    <property type="evidence" value="ECO:0007669"/>
    <property type="project" value="TreeGrafter"/>
</dbReference>
<dbReference type="GO" id="GO:0019843">
    <property type="term" value="F:rRNA binding"/>
    <property type="evidence" value="ECO:0007669"/>
    <property type="project" value="TreeGrafter"/>
</dbReference>
<dbReference type="GO" id="GO:0030697">
    <property type="term" value="F:tRNA (uracil(54)-C5)-methyltransferase activity, S-adenosyl methionine-dependent"/>
    <property type="evidence" value="ECO:0007669"/>
    <property type="project" value="UniProtKB-UniRule"/>
</dbReference>
<dbReference type="GO" id="GO:0000049">
    <property type="term" value="F:tRNA binding"/>
    <property type="evidence" value="ECO:0007669"/>
    <property type="project" value="TreeGrafter"/>
</dbReference>
<dbReference type="GO" id="GO:0030488">
    <property type="term" value="P:tRNA methylation"/>
    <property type="evidence" value="ECO:0007669"/>
    <property type="project" value="UniProtKB-UniRule"/>
</dbReference>
<dbReference type="CDD" id="cd02440">
    <property type="entry name" value="AdoMet_MTases"/>
    <property type="match status" value="1"/>
</dbReference>
<dbReference type="FunFam" id="2.40.50.1070:FF:000001">
    <property type="entry name" value="tRNA/tmRNA (uracil-C(5))-methyltransferase"/>
    <property type="match status" value="1"/>
</dbReference>
<dbReference type="FunFam" id="3.40.50.150:FF:000012">
    <property type="entry name" value="tRNA/tmRNA (uracil-C(5))-methyltransferase"/>
    <property type="match status" value="1"/>
</dbReference>
<dbReference type="Gene3D" id="2.40.50.1070">
    <property type="match status" value="1"/>
</dbReference>
<dbReference type="Gene3D" id="3.40.50.150">
    <property type="entry name" value="Vaccinia Virus protein VP39"/>
    <property type="match status" value="1"/>
</dbReference>
<dbReference type="HAMAP" id="MF_01011">
    <property type="entry name" value="RNA_methyltr_TrmA"/>
    <property type="match status" value="1"/>
</dbReference>
<dbReference type="InterPro" id="IPR030390">
    <property type="entry name" value="MeTrfase_TrmA_AS"/>
</dbReference>
<dbReference type="InterPro" id="IPR030391">
    <property type="entry name" value="MeTrfase_TrmA_CS"/>
</dbReference>
<dbReference type="InterPro" id="IPR029063">
    <property type="entry name" value="SAM-dependent_MTases_sf"/>
</dbReference>
<dbReference type="InterPro" id="IPR011869">
    <property type="entry name" value="TrmA_MeTrfase"/>
</dbReference>
<dbReference type="InterPro" id="IPR010280">
    <property type="entry name" value="U5_MeTrfase_fam"/>
</dbReference>
<dbReference type="NCBIfam" id="TIGR02143">
    <property type="entry name" value="trmA_only"/>
    <property type="match status" value="1"/>
</dbReference>
<dbReference type="PANTHER" id="PTHR47790">
    <property type="entry name" value="TRNA/TMRNA (URACIL-C(5))-METHYLTRANSFERASE"/>
    <property type="match status" value="1"/>
</dbReference>
<dbReference type="PANTHER" id="PTHR47790:SF2">
    <property type="entry name" value="TRNA_TMRNA (URACIL-C(5))-METHYLTRANSFERASE"/>
    <property type="match status" value="1"/>
</dbReference>
<dbReference type="Pfam" id="PF05958">
    <property type="entry name" value="tRNA_U5-meth_tr"/>
    <property type="match status" value="1"/>
</dbReference>
<dbReference type="SUPFAM" id="SSF53335">
    <property type="entry name" value="S-adenosyl-L-methionine-dependent methyltransferases"/>
    <property type="match status" value="1"/>
</dbReference>
<dbReference type="PROSITE" id="PS51687">
    <property type="entry name" value="SAM_MT_RNA_M5U"/>
    <property type="match status" value="1"/>
</dbReference>
<dbReference type="PROSITE" id="PS01230">
    <property type="entry name" value="TRMA_1"/>
    <property type="match status" value="1"/>
</dbReference>
<dbReference type="PROSITE" id="PS01231">
    <property type="entry name" value="TRMA_2"/>
    <property type="match status" value="1"/>
</dbReference>
<feature type="chain" id="PRO_1000148887" description="tRNA/tmRNA (uracil-C(5))-methyltransferase">
    <location>
        <begin position="1"/>
        <end position="366"/>
    </location>
</feature>
<feature type="active site" description="Nucleophile" evidence="1">
    <location>
        <position position="324"/>
    </location>
</feature>
<feature type="active site" description="Proton acceptor" evidence="1">
    <location>
        <position position="358"/>
    </location>
</feature>
<feature type="binding site" evidence="1">
    <location>
        <position position="190"/>
    </location>
    <ligand>
        <name>S-adenosyl-L-methionine</name>
        <dbReference type="ChEBI" id="CHEBI:59789"/>
    </ligand>
</feature>
<feature type="binding site" evidence="1">
    <location>
        <position position="218"/>
    </location>
    <ligand>
        <name>S-adenosyl-L-methionine</name>
        <dbReference type="ChEBI" id="CHEBI:59789"/>
    </ligand>
</feature>
<feature type="binding site" evidence="1">
    <location>
        <position position="223"/>
    </location>
    <ligand>
        <name>S-adenosyl-L-methionine</name>
        <dbReference type="ChEBI" id="CHEBI:59789"/>
    </ligand>
</feature>
<feature type="binding site" evidence="1">
    <location>
        <position position="239"/>
    </location>
    <ligand>
        <name>S-adenosyl-L-methionine</name>
        <dbReference type="ChEBI" id="CHEBI:59789"/>
    </ligand>
</feature>
<feature type="binding site" evidence="1">
    <location>
        <position position="299"/>
    </location>
    <ligand>
        <name>S-adenosyl-L-methionine</name>
        <dbReference type="ChEBI" id="CHEBI:59789"/>
    </ligand>
</feature>
<name>TRMA_ECO81</name>
<protein>
    <recommendedName>
        <fullName evidence="1">tRNA/tmRNA (uracil-C(5))-methyltransferase</fullName>
        <ecNumber evidence="1">2.1.1.-</ecNumber>
        <ecNumber evidence="1">2.1.1.35</ecNumber>
    </recommendedName>
    <alternativeName>
        <fullName evidence="1">tRNA (uracil(54)-C(5))-methyltransferase</fullName>
    </alternativeName>
    <alternativeName>
        <fullName evidence="1">tRNA(m5U54)-methyltransferase</fullName>
        <shortName evidence="1">RUMT</shortName>
    </alternativeName>
    <alternativeName>
        <fullName evidence="1">tmRNA (uracil(341)-C(5))-methyltransferase</fullName>
    </alternativeName>
</protein>
<evidence type="ECO:0000255" key="1">
    <source>
        <dbReference type="HAMAP-Rule" id="MF_01011"/>
    </source>
</evidence>
<gene>
    <name evidence="1" type="primary">trmA</name>
    <name type="ordered locus">ECED1_4674</name>
</gene>
<sequence length="366" mass="42014">MTPEHLPTEQYEAQLAEKVVRLQSMMAPFSNLVPEVFRSPVSHYRMRAEFRIWHDGDDLYHIIFDQQTKSRIRVDSFPAASELINQLMTAMIAGVRNNPFLRHKLFQIDYLTTLSNQAVVSLLYHKKLDDEWRQEAEALRDALRAQNLNVHLIGRATKTKIELDQDYIDERLPVAGKEMIYRQVENSFTQPNAAMNIQMLEWALDVTKGSKGDLLELYCGNGNFSLALARNFDRVLATEIAKPSVAAAQYNIAANHIDNVQIIRMAAEEFTQAMNGVREFNRLQGIDLKSYQCETIFVDPPRSGLDSETEKMVQAYPRILYISCNPETLCKNLETLSQTHKVERLALFDQFPYTHHMECGVLLTAK</sequence>
<accession>B7MR93</accession>
<comment type="function">
    <text evidence="1">Dual-specificity methyltransferase that catalyzes the formation of 5-methyluridine at position 54 (m5U54) in all tRNAs, and that of position 341 (m5U341) in tmRNA (transfer-mRNA).</text>
</comment>
<comment type="catalytic activity">
    <reaction evidence="1">
        <text>uridine(54) in tRNA + S-adenosyl-L-methionine = 5-methyluridine(54) in tRNA + S-adenosyl-L-homocysteine + H(+)</text>
        <dbReference type="Rhea" id="RHEA:42712"/>
        <dbReference type="Rhea" id="RHEA-COMP:10167"/>
        <dbReference type="Rhea" id="RHEA-COMP:10193"/>
        <dbReference type="ChEBI" id="CHEBI:15378"/>
        <dbReference type="ChEBI" id="CHEBI:57856"/>
        <dbReference type="ChEBI" id="CHEBI:59789"/>
        <dbReference type="ChEBI" id="CHEBI:65315"/>
        <dbReference type="ChEBI" id="CHEBI:74447"/>
        <dbReference type="EC" id="2.1.1.35"/>
    </reaction>
</comment>
<comment type="catalytic activity">
    <reaction evidence="1">
        <text>uridine(341) in tmRNA + S-adenosyl-L-methionine = 5-methyluridine(341) in tmRNA + S-adenosyl-L-homocysteine + H(+)</text>
        <dbReference type="Rhea" id="RHEA:43612"/>
        <dbReference type="Rhea" id="RHEA-COMP:10630"/>
        <dbReference type="Rhea" id="RHEA-COMP:10631"/>
        <dbReference type="ChEBI" id="CHEBI:15378"/>
        <dbReference type="ChEBI" id="CHEBI:57856"/>
        <dbReference type="ChEBI" id="CHEBI:59789"/>
        <dbReference type="ChEBI" id="CHEBI:65315"/>
        <dbReference type="ChEBI" id="CHEBI:74447"/>
    </reaction>
</comment>
<comment type="similarity">
    <text evidence="1">Belongs to the class I-like SAM-binding methyltransferase superfamily. RNA M5U methyltransferase family. TrmA subfamily.</text>
</comment>
<reference key="1">
    <citation type="journal article" date="2009" name="PLoS Genet.">
        <title>Organised genome dynamics in the Escherichia coli species results in highly diverse adaptive paths.</title>
        <authorList>
            <person name="Touchon M."/>
            <person name="Hoede C."/>
            <person name="Tenaillon O."/>
            <person name="Barbe V."/>
            <person name="Baeriswyl S."/>
            <person name="Bidet P."/>
            <person name="Bingen E."/>
            <person name="Bonacorsi S."/>
            <person name="Bouchier C."/>
            <person name="Bouvet O."/>
            <person name="Calteau A."/>
            <person name="Chiapello H."/>
            <person name="Clermont O."/>
            <person name="Cruveiller S."/>
            <person name="Danchin A."/>
            <person name="Diard M."/>
            <person name="Dossat C."/>
            <person name="Karoui M.E."/>
            <person name="Frapy E."/>
            <person name="Garry L."/>
            <person name="Ghigo J.M."/>
            <person name="Gilles A.M."/>
            <person name="Johnson J."/>
            <person name="Le Bouguenec C."/>
            <person name="Lescat M."/>
            <person name="Mangenot S."/>
            <person name="Martinez-Jehanne V."/>
            <person name="Matic I."/>
            <person name="Nassif X."/>
            <person name="Oztas S."/>
            <person name="Petit M.A."/>
            <person name="Pichon C."/>
            <person name="Rouy Z."/>
            <person name="Ruf C.S."/>
            <person name="Schneider D."/>
            <person name="Tourret J."/>
            <person name="Vacherie B."/>
            <person name="Vallenet D."/>
            <person name="Medigue C."/>
            <person name="Rocha E.P.C."/>
            <person name="Denamur E."/>
        </authorList>
    </citation>
    <scope>NUCLEOTIDE SEQUENCE [LARGE SCALE GENOMIC DNA]</scope>
    <source>
        <strain>ED1a</strain>
    </source>
</reference>
<keyword id="KW-0489">Methyltransferase</keyword>
<keyword id="KW-0949">S-adenosyl-L-methionine</keyword>
<keyword id="KW-0808">Transferase</keyword>
<keyword id="KW-0819">tRNA processing</keyword>
<proteinExistence type="inferred from homology"/>